<sequence>MEEFQVYLELARSRQYDFLYPLIFREYIYALAYDHGFNNSILVENLGYDNKSSLLIIKRLITRMYQQNHLIISANDSNKNPFWGCKKNLYSQLISEGFAVSVEIPFSLQLISSLEGAEIVKSYNLRSIHSIFPFFEEKFAYLTYVSDVQIPYPIHLEILVQTXXXXXXXXSCFHLLRLFLYEYWNWNSLITPKKWISTFSKSNPRLFLFLYNFYVCEYESIFLFLRNKSSYLRLTSSGVLFERINFYAKIEYFVEVFDKDFLSTLWFFKDSFIHYGRYQGKSILASKNTPFLMTKWKYYLIHLWQCHFYVWSQPGKIHINQLSEHSFDFLGYFSNVRLNPSVVRSQMLENSFLIENVMKKLDTIIPIIPLIRSLAKAKFCNVLGHPISKPVWADSADFDIIDLFLRRCRNLSHYYNGSSTKKSLYRIKHILRLSCIKTLARKHKSTVRVFLKSLGSELLEEFFTEEKEILSLIFPRASSTLQRLYRGRIWYLDIFYFHQ</sequence>
<proteinExistence type="inferred from homology"/>
<organism>
    <name type="scientific">Chamaecrista fasciculata</name>
    <name type="common">Showy partridge pea</name>
    <name type="synonym">Cassia fasciculata</name>
    <dbReference type="NCBI Taxonomy" id="53854"/>
    <lineage>
        <taxon>Eukaryota</taxon>
        <taxon>Viridiplantae</taxon>
        <taxon>Streptophyta</taxon>
        <taxon>Embryophyta</taxon>
        <taxon>Tracheophyta</taxon>
        <taxon>Spermatophyta</taxon>
        <taxon>Magnoliopsida</taxon>
        <taxon>eudicotyledons</taxon>
        <taxon>Gunneridae</taxon>
        <taxon>Pentapetalae</taxon>
        <taxon>rosids</taxon>
        <taxon>fabids</taxon>
        <taxon>Fabales</taxon>
        <taxon>Fabaceae</taxon>
        <taxon>Caesalpinioideae</taxon>
        <taxon>Cassia clade</taxon>
        <taxon>Chamaecrista</taxon>
    </lineage>
</organism>
<gene>
    <name evidence="1" type="primary">matK</name>
</gene>
<protein>
    <recommendedName>
        <fullName evidence="1">Maturase K</fullName>
    </recommendedName>
    <alternativeName>
        <fullName evidence="1">Intron maturase</fullName>
    </alternativeName>
</protein>
<evidence type="ECO:0000255" key="1">
    <source>
        <dbReference type="HAMAP-Rule" id="MF_01390"/>
    </source>
</evidence>
<accession>Q5YJU7</accession>
<keyword id="KW-0150">Chloroplast</keyword>
<keyword id="KW-0507">mRNA processing</keyword>
<keyword id="KW-0934">Plastid</keyword>
<keyword id="KW-0694">RNA-binding</keyword>
<keyword id="KW-0819">tRNA processing</keyword>
<comment type="function">
    <text evidence="1">Usually encoded in the trnK tRNA gene intron. Probably assists in splicing its own and other chloroplast group II introns.</text>
</comment>
<comment type="subcellular location">
    <subcellularLocation>
        <location>Plastid</location>
        <location>Chloroplast</location>
    </subcellularLocation>
</comment>
<comment type="similarity">
    <text evidence="1">Belongs to the intron maturase 2 family. MatK subfamily.</text>
</comment>
<feature type="chain" id="PRO_0000143324" description="Maturase K">
    <location>
        <begin position="1"/>
        <end position="499"/>
    </location>
</feature>
<dbReference type="EMBL" id="AY386955">
    <property type="protein sequence ID" value="AAQ92033.1"/>
    <property type="molecule type" value="Genomic_DNA"/>
</dbReference>
<dbReference type="GO" id="GO:0009507">
    <property type="term" value="C:chloroplast"/>
    <property type="evidence" value="ECO:0007669"/>
    <property type="project" value="UniProtKB-SubCell"/>
</dbReference>
<dbReference type="GO" id="GO:0003723">
    <property type="term" value="F:RNA binding"/>
    <property type="evidence" value="ECO:0007669"/>
    <property type="project" value="UniProtKB-KW"/>
</dbReference>
<dbReference type="GO" id="GO:0006397">
    <property type="term" value="P:mRNA processing"/>
    <property type="evidence" value="ECO:0007669"/>
    <property type="project" value="UniProtKB-KW"/>
</dbReference>
<dbReference type="GO" id="GO:0008380">
    <property type="term" value="P:RNA splicing"/>
    <property type="evidence" value="ECO:0007669"/>
    <property type="project" value="UniProtKB-UniRule"/>
</dbReference>
<dbReference type="GO" id="GO:0008033">
    <property type="term" value="P:tRNA processing"/>
    <property type="evidence" value="ECO:0007669"/>
    <property type="project" value="UniProtKB-KW"/>
</dbReference>
<dbReference type="HAMAP" id="MF_01390">
    <property type="entry name" value="MatK"/>
    <property type="match status" value="1"/>
</dbReference>
<dbReference type="InterPro" id="IPR024937">
    <property type="entry name" value="Domain_X"/>
</dbReference>
<dbReference type="InterPro" id="IPR002866">
    <property type="entry name" value="Maturase_MatK"/>
</dbReference>
<dbReference type="InterPro" id="IPR024942">
    <property type="entry name" value="Maturase_MatK_N"/>
</dbReference>
<dbReference type="PANTHER" id="PTHR34811">
    <property type="entry name" value="MATURASE K"/>
    <property type="match status" value="1"/>
</dbReference>
<dbReference type="PANTHER" id="PTHR34811:SF1">
    <property type="entry name" value="MATURASE K"/>
    <property type="match status" value="1"/>
</dbReference>
<dbReference type="Pfam" id="PF01348">
    <property type="entry name" value="Intron_maturas2"/>
    <property type="match status" value="1"/>
</dbReference>
<dbReference type="Pfam" id="PF01824">
    <property type="entry name" value="MatK_N"/>
    <property type="match status" value="1"/>
</dbReference>
<name>MATK_CHAFS</name>
<reference key="1">
    <citation type="journal article" date="2004" name="Am. J. Bot.">
        <title>A phylogeny of legumes (Leguminosae) based on analysis of the plastid matK gene resolves many well-supported subclades within the family.</title>
        <authorList>
            <person name="Wojciechowski M.F."/>
            <person name="Lavin M."/>
            <person name="Sanderson M.J."/>
        </authorList>
        <dbReference type="AGRICOLA" id="IND43661289"/>
    </citation>
    <scope>NUCLEOTIDE SEQUENCE [GENOMIC DNA]</scope>
</reference>
<geneLocation type="chloroplast"/>